<keyword id="KW-0067">ATP-binding</keyword>
<keyword id="KW-0997">Cell inner membrane</keyword>
<keyword id="KW-1003">Cell membrane</keyword>
<keyword id="KW-0472">Membrane</keyword>
<keyword id="KW-0547">Nucleotide-binding</keyword>
<keyword id="KW-0764">Sulfate transport</keyword>
<keyword id="KW-1278">Translocase</keyword>
<keyword id="KW-0813">Transport</keyword>
<dbReference type="EC" id="7.3.2.3" evidence="1"/>
<dbReference type="EMBL" id="BX640447">
    <property type="protein sequence ID" value="CAE33942.1"/>
    <property type="molecule type" value="Genomic_DNA"/>
</dbReference>
<dbReference type="RefSeq" id="WP_010926819.1">
    <property type="nucleotide sequence ID" value="NC_002927.3"/>
</dbReference>
<dbReference type="SMR" id="Q7WGW1"/>
<dbReference type="KEGG" id="bbr:BB3450"/>
<dbReference type="eggNOG" id="COG1118">
    <property type="taxonomic scope" value="Bacteria"/>
</dbReference>
<dbReference type="HOGENOM" id="CLU_000604_1_1_4"/>
<dbReference type="Proteomes" id="UP000001027">
    <property type="component" value="Chromosome"/>
</dbReference>
<dbReference type="GO" id="GO:0043190">
    <property type="term" value="C:ATP-binding cassette (ABC) transporter complex"/>
    <property type="evidence" value="ECO:0007669"/>
    <property type="project" value="InterPro"/>
</dbReference>
<dbReference type="GO" id="GO:0015419">
    <property type="term" value="F:ABC-type sulfate transporter activity"/>
    <property type="evidence" value="ECO:0007669"/>
    <property type="project" value="InterPro"/>
</dbReference>
<dbReference type="GO" id="GO:0102025">
    <property type="term" value="F:ABC-type thiosulfate transporter activity"/>
    <property type="evidence" value="ECO:0007669"/>
    <property type="project" value="RHEA"/>
</dbReference>
<dbReference type="GO" id="GO:0005524">
    <property type="term" value="F:ATP binding"/>
    <property type="evidence" value="ECO:0007669"/>
    <property type="project" value="UniProtKB-KW"/>
</dbReference>
<dbReference type="GO" id="GO:0016887">
    <property type="term" value="F:ATP hydrolysis activity"/>
    <property type="evidence" value="ECO:0007669"/>
    <property type="project" value="InterPro"/>
</dbReference>
<dbReference type="CDD" id="cd03296">
    <property type="entry name" value="ABC_CysA_sulfate_importer"/>
    <property type="match status" value="1"/>
</dbReference>
<dbReference type="FunFam" id="3.40.50.300:FF:000227">
    <property type="entry name" value="Sulfate/thiosulfate import ATP-binding protein CysA"/>
    <property type="match status" value="1"/>
</dbReference>
<dbReference type="Gene3D" id="3.40.50.300">
    <property type="entry name" value="P-loop containing nucleotide triphosphate hydrolases"/>
    <property type="match status" value="1"/>
</dbReference>
<dbReference type="InterPro" id="IPR003593">
    <property type="entry name" value="AAA+_ATPase"/>
</dbReference>
<dbReference type="InterPro" id="IPR050093">
    <property type="entry name" value="ABC_SmlMolc_Importer"/>
</dbReference>
<dbReference type="InterPro" id="IPR003439">
    <property type="entry name" value="ABC_transporter-like_ATP-bd"/>
</dbReference>
<dbReference type="InterPro" id="IPR017871">
    <property type="entry name" value="ABC_transporter-like_CS"/>
</dbReference>
<dbReference type="InterPro" id="IPR041193">
    <property type="entry name" value="CysA_C"/>
</dbReference>
<dbReference type="InterPro" id="IPR008995">
    <property type="entry name" value="Mo/tungstate-bd_C_term_dom"/>
</dbReference>
<dbReference type="InterPro" id="IPR027417">
    <property type="entry name" value="P-loop_NTPase"/>
</dbReference>
<dbReference type="InterPro" id="IPR005666">
    <property type="entry name" value="Sulph_transpt1"/>
</dbReference>
<dbReference type="InterPro" id="IPR024765">
    <property type="entry name" value="TOBE-like"/>
</dbReference>
<dbReference type="NCBIfam" id="TIGR00968">
    <property type="entry name" value="3a0106s01"/>
    <property type="match status" value="1"/>
</dbReference>
<dbReference type="PANTHER" id="PTHR42781">
    <property type="entry name" value="SPERMIDINE/PUTRESCINE IMPORT ATP-BINDING PROTEIN POTA"/>
    <property type="match status" value="1"/>
</dbReference>
<dbReference type="PANTHER" id="PTHR42781:SF4">
    <property type="entry name" value="SPERMIDINE_PUTRESCINE IMPORT ATP-BINDING PROTEIN POTA"/>
    <property type="match status" value="1"/>
</dbReference>
<dbReference type="Pfam" id="PF00005">
    <property type="entry name" value="ABC_tran"/>
    <property type="match status" value="1"/>
</dbReference>
<dbReference type="Pfam" id="PF17850">
    <property type="entry name" value="CysA_C_terminal"/>
    <property type="match status" value="1"/>
</dbReference>
<dbReference type="Pfam" id="PF12857">
    <property type="entry name" value="TOBE_3"/>
    <property type="match status" value="1"/>
</dbReference>
<dbReference type="SMART" id="SM00382">
    <property type="entry name" value="AAA"/>
    <property type="match status" value="1"/>
</dbReference>
<dbReference type="SUPFAM" id="SSF50331">
    <property type="entry name" value="MOP-like"/>
    <property type="match status" value="1"/>
</dbReference>
<dbReference type="SUPFAM" id="SSF52540">
    <property type="entry name" value="P-loop containing nucleoside triphosphate hydrolases"/>
    <property type="match status" value="1"/>
</dbReference>
<dbReference type="PROSITE" id="PS00211">
    <property type="entry name" value="ABC_TRANSPORTER_1"/>
    <property type="match status" value="1"/>
</dbReference>
<dbReference type="PROSITE" id="PS50893">
    <property type="entry name" value="ABC_TRANSPORTER_2"/>
    <property type="match status" value="1"/>
</dbReference>
<dbReference type="PROSITE" id="PS51237">
    <property type="entry name" value="CYSA"/>
    <property type="match status" value="1"/>
</dbReference>
<gene>
    <name evidence="1" type="primary">cysA</name>
    <name type="ordered locus">BB3450</name>
</gene>
<organism>
    <name type="scientific">Bordetella bronchiseptica (strain ATCC BAA-588 / NCTC 13252 / RB50)</name>
    <name type="common">Alcaligenes bronchisepticus</name>
    <dbReference type="NCBI Taxonomy" id="257310"/>
    <lineage>
        <taxon>Bacteria</taxon>
        <taxon>Pseudomonadati</taxon>
        <taxon>Pseudomonadota</taxon>
        <taxon>Betaproteobacteria</taxon>
        <taxon>Burkholderiales</taxon>
        <taxon>Alcaligenaceae</taxon>
        <taxon>Bordetella</taxon>
    </lineage>
</organism>
<name>CYSA_BORBR</name>
<protein>
    <recommendedName>
        <fullName evidence="1">Sulfate/thiosulfate import ATP-binding protein CysA</fullName>
        <ecNumber evidence="1">7.3.2.3</ecNumber>
    </recommendedName>
    <alternativeName>
        <fullName evidence="1">Sulfate-transporting ATPase</fullName>
    </alternativeName>
</protein>
<feature type="chain" id="PRO_0000092253" description="Sulfate/thiosulfate import ATP-binding protein CysA">
    <location>
        <begin position="1"/>
        <end position="354"/>
    </location>
</feature>
<feature type="domain" description="ABC transporter" evidence="1">
    <location>
        <begin position="3"/>
        <end position="237"/>
    </location>
</feature>
<feature type="binding site" evidence="1">
    <location>
        <begin position="35"/>
        <end position="42"/>
    </location>
    <ligand>
        <name>ATP</name>
        <dbReference type="ChEBI" id="CHEBI:30616"/>
    </ligand>
</feature>
<evidence type="ECO:0000255" key="1">
    <source>
        <dbReference type="HAMAP-Rule" id="MF_01701"/>
    </source>
</evidence>
<accession>Q7WGW1</accession>
<comment type="function">
    <text evidence="1">Part of the ABC transporter complex CysAWTP involved in sulfate/thiosulfate import. Responsible for energy coupling to the transport system.</text>
</comment>
<comment type="catalytic activity">
    <reaction evidence="1">
        <text>sulfate(out) + ATP + H2O = sulfate(in) + ADP + phosphate + H(+)</text>
        <dbReference type="Rhea" id="RHEA:10192"/>
        <dbReference type="ChEBI" id="CHEBI:15377"/>
        <dbReference type="ChEBI" id="CHEBI:15378"/>
        <dbReference type="ChEBI" id="CHEBI:16189"/>
        <dbReference type="ChEBI" id="CHEBI:30616"/>
        <dbReference type="ChEBI" id="CHEBI:43474"/>
        <dbReference type="ChEBI" id="CHEBI:456216"/>
        <dbReference type="EC" id="7.3.2.3"/>
    </reaction>
</comment>
<comment type="catalytic activity">
    <reaction evidence="1">
        <text>thiosulfate(out) + ATP + H2O = thiosulfate(in) + ADP + phosphate + H(+)</text>
        <dbReference type="Rhea" id="RHEA:29871"/>
        <dbReference type="ChEBI" id="CHEBI:15377"/>
        <dbReference type="ChEBI" id="CHEBI:15378"/>
        <dbReference type="ChEBI" id="CHEBI:30616"/>
        <dbReference type="ChEBI" id="CHEBI:33542"/>
        <dbReference type="ChEBI" id="CHEBI:43474"/>
        <dbReference type="ChEBI" id="CHEBI:456216"/>
        <dbReference type="EC" id="7.3.2.3"/>
    </reaction>
</comment>
<comment type="subunit">
    <text evidence="1">The complex is composed of two ATP-binding proteins (CysA), two transmembrane proteins (CysT and CysW) and a solute-binding protein (CysP).</text>
</comment>
<comment type="subcellular location">
    <subcellularLocation>
        <location evidence="1">Cell inner membrane</location>
        <topology evidence="1">Peripheral membrane protein</topology>
    </subcellularLocation>
</comment>
<comment type="similarity">
    <text evidence="1">Belongs to the ABC transporter superfamily. Sulfate/tungstate importer (TC 3.A.1.6) family.</text>
</comment>
<proteinExistence type="inferred from homology"/>
<reference key="1">
    <citation type="journal article" date="2003" name="Nat. Genet.">
        <title>Comparative analysis of the genome sequences of Bordetella pertussis, Bordetella parapertussis and Bordetella bronchiseptica.</title>
        <authorList>
            <person name="Parkhill J."/>
            <person name="Sebaihia M."/>
            <person name="Preston A."/>
            <person name="Murphy L.D."/>
            <person name="Thomson N.R."/>
            <person name="Harris D.E."/>
            <person name="Holden M.T.G."/>
            <person name="Churcher C.M."/>
            <person name="Bentley S.D."/>
            <person name="Mungall K.L."/>
            <person name="Cerdeno-Tarraga A.-M."/>
            <person name="Temple L."/>
            <person name="James K.D."/>
            <person name="Harris B."/>
            <person name="Quail M.A."/>
            <person name="Achtman M."/>
            <person name="Atkin R."/>
            <person name="Baker S."/>
            <person name="Basham D."/>
            <person name="Bason N."/>
            <person name="Cherevach I."/>
            <person name="Chillingworth T."/>
            <person name="Collins M."/>
            <person name="Cronin A."/>
            <person name="Davis P."/>
            <person name="Doggett J."/>
            <person name="Feltwell T."/>
            <person name="Goble A."/>
            <person name="Hamlin N."/>
            <person name="Hauser H."/>
            <person name="Holroyd S."/>
            <person name="Jagels K."/>
            <person name="Leather S."/>
            <person name="Moule S."/>
            <person name="Norberczak H."/>
            <person name="O'Neil S."/>
            <person name="Ormond D."/>
            <person name="Price C."/>
            <person name="Rabbinowitsch E."/>
            <person name="Rutter S."/>
            <person name="Sanders M."/>
            <person name="Saunders D."/>
            <person name="Seeger K."/>
            <person name="Sharp S."/>
            <person name="Simmonds M."/>
            <person name="Skelton J."/>
            <person name="Squares R."/>
            <person name="Squares S."/>
            <person name="Stevens K."/>
            <person name="Unwin L."/>
            <person name="Whitehead S."/>
            <person name="Barrell B.G."/>
            <person name="Maskell D.J."/>
        </authorList>
    </citation>
    <scope>NUCLEOTIDE SEQUENCE [LARGE SCALE GENOMIC DNA]</scope>
    <source>
        <strain>ATCC BAA-588 / NCTC 13252 / RB50</strain>
    </source>
</reference>
<sequence length="354" mass="39251">MSIEVRGLSKRFGAFRALDEVSLHIETGELVALLGPSGCGKTTLLRIIAGLESADAGSVLFAGEDATDVDVRQRQVGFVFQHYALFKHMTVFENVAFGLRVRHRSQRPSEARIRAKVLDLLGLVQLDWLADRYPAQLSGGQRQRIALARALAVEPRVLLLDEPFGALDAKVRKELRRWLRRLHDELHVASVFVTHDQEEALEVADRVVLMNAGRIEQVGSPREVWERPATPFVYGFLGDVNQLHGHATRGVWRLGEVALPAPDLPEADNQRAIAYVRPHDIDLARAGTAAPGIPVRLNHVYLAGPSAYLELARQDDQAIIEAQVPEPLFRSLGLKEGEALLAQPRRARVFAVQP</sequence>